<proteinExistence type="inferred from homology"/>
<keyword id="KW-0067">ATP-binding</keyword>
<keyword id="KW-0963">Cytoplasm</keyword>
<keyword id="KW-0235">DNA replication</keyword>
<keyword id="KW-0238">DNA-binding</keyword>
<keyword id="KW-0446">Lipid-binding</keyword>
<keyword id="KW-0547">Nucleotide-binding</keyword>
<accession>Q4V0S8</accession>
<comment type="function">
    <text evidence="1">Plays an essential role in the initiation and regulation of chromosomal replication. ATP-DnaA binds to the origin of replication (oriC) to initiate formation of the DNA replication initiation complex once per cell cycle. Binds the DnaA box (a 9 base pair repeat at the origin) and separates the double-stranded (ds)DNA. Forms a right-handed helical filament on oriC DNA; dsDNA binds to the exterior of the filament while single-stranded (ss)DNA is stabiized in the filament's interior. The ATP-DnaA-oriC complex binds and stabilizes one strand of the AT-rich DNA unwinding element (DUE), permitting loading of DNA polymerase. After initiation quickly degrades to an ADP-DnaA complex that is not apt for DNA replication. Binds acidic phospholipids.</text>
</comment>
<comment type="subunit">
    <text evidence="1">Oligomerizes as a right-handed, spiral filament on DNA at oriC.</text>
</comment>
<comment type="subcellular location">
    <subcellularLocation>
        <location evidence="1">Cytoplasm</location>
    </subcellularLocation>
</comment>
<comment type="domain">
    <text evidence="1">Domain I is involved in oligomerization and binding regulators, domain II is flexibile and of varying length in different bacteria, domain III forms the AAA+ region, while domain IV binds dsDNA.</text>
</comment>
<comment type="similarity">
    <text evidence="1">Belongs to the DnaA family.</text>
</comment>
<dbReference type="EMBL" id="CP000050">
    <property type="protein sequence ID" value="AAY47095.1"/>
    <property type="molecule type" value="Genomic_DNA"/>
</dbReference>
<dbReference type="RefSeq" id="WP_011269449.1">
    <property type="nucleotide sequence ID" value="NC_007086.1"/>
</dbReference>
<dbReference type="SMR" id="Q4V0S8"/>
<dbReference type="KEGG" id="xcb:XC_0001"/>
<dbReference type="HOGENOM" id="CLU_026910_0_1_6"/>
<dbReference type="Proteomes" id="UP000000420">
    <property type="component" value="Chromosome"/>
</dbReference>
<dbReference type="GO" id="GO:0005737">
    <property type="term" value="C:cytoplasm"/>
    <property type="evidence" value="ECO:0007669"/>
    <property type="project" value="UniProtKB-SubCell"/>
</dbReference>
<dbReference type="GO" id="GO:0005886">
    <property type="term" value="C:plasma membrane"/>
    <property type="evidence" value="ECO:0007669"/>
    <property type="project" value="TreeGrafter"/>
</dbReference>
<dbReference type="GO" id="GO:0005524">
    <property type="term" value="F:ATP binding"/>
    <property type="evidence" value="ECO:0007669"/>
    <property type="project" value="UniProtKB-UniRule"/>
</dbReference>
<dbReference type="GO" id="GO:0016887">
    <property type="term" value="F:ATP hydrolysis activity"/>
    <property type="evidence" value="ECO:0007669"/>
    <property type="project" value="InterPro"/>
</dbReference>
<dbReference type="GO" id="GO:0003688">
    <property type="term" value="F:DNA replication origin binding"/>
    <property type="evidence" value="ECO:0007669"/>
    <property type="project" value="UniProtKB-UniRule"/>
</dbReference>
<dbReference type="GO" id="GO:0008289">
    <property type="term" value="F:lipid binding"/>
    <property type="evidence" value="ECO:0007669"/>
    <property type="project" value="UniProtKB-KW"/>
</dbReference>
<dbReference type="GO" id="GO:0006270">
    <property type="term" value="P:DNA replication initiation"/>
    <property type="evidence" value="ECO:0007669"/>
    <property type="project" value="UniProtKB-UniRule"/>
</dbReference>
<dbReference type="GO" id="GO:0006275">
    <property type="term" value="P:regulation of DNA replication"/>
    <property type="evidence" value="ECO:0007669"/>
    <property type="project" value="UniProtKB-UniRule"/>
</dbReference>
<dbReference type="CDD" id="cd00009">
    <property type="entry name" value="AAA"/>
    <property type="match status" value="1"/>
</dbReference>
<dbReference type="CDD" id="cd06571">
    <property type="entry name" value="Bac_DnaA_C"/>
    <property type="match status" value="1"/>
</dbReference>
<dbReference type="FunFam" id="1.10.1750.10:FF:000001">
    <property type="entry name" value="Chromosomal replication initiator protein DnaA"/>
    <property type="match status" value="1"/>
</dbReference>
<dbReference type="FunFam" id="1.10.8.60:FF:000003">
    <property type="entry name" value="Chromosomal replication initiator protein DnaA"/>
    <property type="match status" value="1"/>
</dbReference>
<dbReference type="Gene3D" id="1.10.1750.10">
    <property type="match status" value="1"/>
</dbReference>
<dbReference type="Gene3D" id="1.10.8.60">
    <property type="match status" value="1"/>
</dbReference>
<dbReference type="Gene3D" id="3.30.300.180">
    <property type="match status" value="1"/>
</dbReference>
<dbReference type="Gene3D" id="3.40.50.300">
    <property type="entry name" value="P-loop containing nucleotide triphosphate hydrolases"/>
    <property type="match status" value="1"/>
</dbReference>
<dbReference type="HAMAP" id="MF_00377">
    <property type="entry name" value="DnaA_bact"/>
    <property type="match status" value="1"/>
</dbReference>
<dbReference type="InterPro" id="IPR003593">
    <property type="entry name" value="AAA+_ATPase"/>
</dbReference>
<dbReference type="InterPro" id="IPR001957">
    <property type="entry name" value="Chromosome_initiator_DnaA"/>
</dbReference>
<dbReference type="InterPro" id="IPR020591">
    <property type="entry name" value="Chromosome_initiator_DnaA-like"/>
</dbReference>
<dbReference type="InterPro" id="IPR018312">
    <property type="entry name" value="Chromosome_initiator_DnaA_CS"/>
</dbReference>
<dbReference type="InterPro" id="IPR013159">
    <property type="entry name" value="DnaA_C"/>
</dbReference>
<dbReference type="InterPro" id="IPR013317">
    <property type="entry name" value="DnaA_dom"/>
</dbReference>
<dbReference type="InterPro" id="IPR024633">
    <property type="entry name" value="DnaA_N_dom"/>
</dbReference>
<dbReference type="InterPro" id="IPR038454">
    <property type="entry name" value="DnaA_N_sf"/>
</dbReference>
<dbReference type="InterPro" id="IPR027417">
    <property type="entry name" value="P-loop_NTPase"/>
</dbReference>
<dbReference type="InterPro" id="IPR010921">
    <property type="entry name" value="Trp_repressor/repl_initiator"/>
</dbReference>
<dbReference type="NCBIfam" id="TIGR00362">
    <property type="entry name" value="DnaA"/>
    <property type="match status" value="1"/>
</dbReference>
<dbReference type="PANTHER" id="PTHR30050">
    <property type="entry name" value="CHROMOSOMAL REPLICATION INITIATOR PROTEIN DNAA"/>
    <property type="match status" value="1"/>
</dbReference>
<dbReference type="PANTHER" id="PTHR30050:SF2">
    <property type="entry name" value="CHROMOSOMAL REPLICATION INITIATOR PROTEIN DNAA"/>
    <property type="match status" value="1"/>
</dbReference>
<dbReference type="Pfam" id="PF00308">
    <property type="entry name" value="Bac_DnaA"/>
    <property type="match status" value="1"/>
</dbReference>
<dbReference type="Pfam" id="PF08299">
    <property type="entry name" value="Bac_DnaA_C"/>
    <property type="match status" value="1"/>
</dbReference>
<dbReference type="Pfam" id="PF11638">
    <property type="entry name" value="DnaA_N"/>
    <property type="match status" value="1"/>
</dbReference>
<dbReference type="PRINTS" id="PR00051">
    <property type="entry name" value="DNAA"/>
</dbReference>
<dbReference type="SMART" id="SM00382">
    <property type="entry name" value="AAA"/>
    <property type="match status" value="1"/>
</dbReference>
<dbReference type="SMART" id="SM00760">
    <property type="entry name" value="Bac_DnaA_C"/>
    <property type="match status" value="1"/>
</dbReference>
<dbReference type="SUPFAM" id="SSF52540">
    <property type="entry name" value="P-loop containing nucleoside triphosphate hydrolases"/>
    <property type="match status" value="1"/>
</dbReference>
<dbReference type="SUPFAM" id="SSF48295">
    <property type="entry name" value="TrpR-like"/>
    <property type="match status" value="1"/>
</dbReference>
<dbReference type="PROSITE" id="PS01008">
    <property type="entry name" value="DNAA"/>
    <property type="match status" value="1"/>
</dbReference>
<gene>
    <name evidence="1" type="primary">dnaA</name>
    <name type="ordered locus">XC_0001</name>
</gene>
<protein>
    <recommendedName>
        <fullName evidence="1">Chromosomal replication initiator protein DnaA</fullName>
    </recommendedName>
</protein>
<sequence>MDAWPRCLERLEAEFPPEDVHTWLKPLQAEDRGDSIVLYAPNAFIVEQVRERYLPRIRELLAYFAGNGEVALAVGSRPRAPEPLPAPQAVASAPAAAPIVPFAGNLDSHYTFANFVEGRSNQLGLAAAIQAAQKPGDRAHNPLLLYGSTGLGKTHLMFAAGNALRQANPAAKVMYLRSEQFFSAMIRALHDKAMDQFKRQFHQIDALLIDDIQFFAGMDRTQEEFFHTFNALFDGRQHIILTCDRYPREVEGLEPRLKSRLAWGLSVAIDPPDFETRAAIVLAKARERGAEIPDDVAFLIAKKMRSNVRDLEGALNTLVARANFTGRSITVEFAQETLRDLLRAQQQAIGIPNIQKTVADYYGLQMKDLLSKRRTRSLARPRQVAMALAKELTEHSLPEIGDAFAGRDHTTVLHACRQIRTLMEADGKLREDWEKLIRKLSE</sequence>
<feature type="chain" id="PRO_1000048758" description="Chromosomal replication initiator protein DnaA">
    <location>
        <begin position="1"/>
        <end position="442"/>
    </location>
</feature>
<feature type="region of interest" description="Domain I, interacts with DnaA modulators" evidence="1">
    <location>
        <begin position="1"/>
        <end position="75"/>
    </location>
</feature>
<feature type="region of interest" description="Domain II" evidence="1">
    <location>
        <begin position="75"/>
        <end position="104"/>
    </location>
</feature>
<feature type="region of interest" description="Domain III, AAA+ region" evidence="1">
    <location>
        <begin position="105"/>
        <end position="322"/>
    </location>
</feature>
<feature type="region of interest" description="Domain IV, binds dsDNA" evidence="1">
    <location>
        <begin position="323"/>
        <end position="442"/>
    </location>
</feature>
<feature type="binding site" evidence="1">
    <location>
        <position position="150"/>
    </location>
    <ligand>
        <name>ATP</name>
        <dbReference type="ChEBI" id="CHEBI:30616"/>
    </ligand>
</feature>
<feature type="binding site" evidence="1">
    <location>
        <position position="152"/>
    </location>
    <ligand>
        <name>ATP</name>
        <dbReference type="ChEBI" id="CHEBI:30616"/>
    </ligand>
</feature>
<feature type="binding site" evidence="1">
    <location>
        <position position="153"/>
    </location>
    <ligand>
        <name>ATP</name>
        <dbReference type="ChEBI" id="CHEBI:30616"/>
    </ligand>
</feature>
<feature type="binding site" evidence="1">
    <location>
        <position position="154"/>
    </location>
    <ligand>
        <name>ATP</name>
        <dbReference type="ChEBI" id="CHEBI:30616"/>
    </ligand>
</feature>
<organism>
    <name type="scientific">Xanthomonas campestris pv. campestris (strain 8004)</name>
    <dbReference type="NCBI Taxonomy" id="314565"/>
    <lineage>
        <taxon>Bacteria</taxon>
        <taxon>Pseudomonadati</taxon>
        <taxon>Pseudomonadota</taxon>
        <taxon>Gammaproteobacteria</taxon>
        <taxon>Lysobacterales</taxon>
        <taxon>Lysobacteraceae</taxon>
        <taxon>Xanthomonas</taxon>
    </lineage>
</organism>
<evidence type="ECO:0000255" key="1">
    <source>
        <dbReference type="HAMAP-Rule" id="MF_00377"/>
    </source>
</evidence>
<reference key="1">
    <citation type="journal article" date="2005" name="Genome Res.">
        <title>Comparative and functional genomic analyses of the pathogenicity of phytopathogen Xanthomonas campestris pv. campestris.</title>
        <authorList>
            <person name="Qian W."/>
            <person name="Jia Y."/>
            <person name="Ren S.-X."/>
            <person name="He Y.-Q."/>
            <person name="Feng J.-X."/>
            <person name="Lu L.-F."/>
            <person name="Sun Q."/>
            <person name="Ying G."/>
            <person name="Tang D.-J."/>
            <person name="Tang H."/>
            <person name="Wu W."/>
            <person name="Hao P."/>
            <person name="Wang L."/>
            <person name="Jiang B.-L."/>
            <person name="Zeng S."/>
            <person name="Gu W.-Y."/>
            <person name="Lu G."/>
            <person name="Rong L."/>
            <person name="Tian Y."/>
            <person name="Yao Z."/>
            <person name="Fu G."/>
            <person name="Chen B."/>
            <person name="Fang R."/>
            <person name="Qiang B."/>
            <person name="Chen Z."/>
            <person name="Zhao G.-P."/>
            <person name="Tang J.-L."/>
            <person name="He C."/>
        </authorList>
    </citation>
    <scope>NUCLEOTIDE SEQUENCE [LARGE SCALE GENOMIC DNA]</scope>
    <source>
        <strain>8004</strain>
    </source>
</reference>
<name>DNAA_XANC8</name>